<dbReference type="EMBL" id="AK097751">
    <property type="protein sequence ID" value="BAC05160.1"/>
    <property type="molecule type" value="mRNA"/>
</dbReference>
<dbReference type="EMBL" id="AC096772">
    <property type="protein sequence ID" value="AAY24056.1"/>
    <property type="molecule type" value="Genomic_DNA"/>
</dbReference>
<dbReference type="EMBL" id="CH471063">
    <property type="protein sequence ID" value="EAW70420.1"/>
    <property type="molecule type" value="Genomic_DNA"/>
</dbReference>
<dbReference type="EMBL" id="BC067253">
    <property type="protein sequence ID" value="AAH67253.1"/>
    <property type="status" value="ALT_FRAME"/>
    <property type="molecule type" value="mRNA"/>
</dbReference>
<dbReference type="CCDS" id="CCDS2377.1">
    <molecule id="Q8N7R7-3"/>
</dbReference>
<dbReference type="CCDS" id="CCDS46503.1">
    <molecule id="Q8N7R7-2"/>
</dbReference>
<dbReference type="CCDS" id="CCDS82564.1">
    <molecule id="Q8N7R7-1"/>
</dbReference>
<dbReference type="RefSeq" id="NP_001135772.1">
    <molecule id="Q8N7R7-2"/>
    <property type="nucleotide sequence ID" value="NM_001142300.2"/>
</dbReference>
<dbReference type="RefSeq" id="NP_001317147.1">
    <molecule id="Q8N7R7-1"/>
    <property type="nucleotide sequence ID" value="NM_001330218.2"/>
</dbReference>
<dbReference type="RefSeq" id="NP_689736.1">
    <molecule id="Q8N7R7-3"/>
    <property type="nucleotide sequence ID" value="NM_152523.3"/>
</dbReference>
<dbReference type="SMR" id="Q8N7R7"/>
<dbReference type="BioGRID" id="127353">
    <property type="interactions" value="65"/>
</dbReference>
<dbReference type="FunCoup" id="Q8N7R7">
    <property type="interactions" value="1270"/>
</dbReference>
<dbReference type="IntAct" id="Q8N7R7">
    <property type="interactions" value="53"/>
</dbReference>
<dbReference type="STRING" id="9606.ENSP00000295414"/>
<dbReference type="iPTMnet" id="Q8N7R7"/>
<dbReference type="PhosphoSitePlus" id="Q8N7R7"/>
<dbReference type="SwissPalm" id="Q8N7R7"/>
<dbReference type="BioMuta" id="CCNYL1"/>
<dbReference type="DMDM" id="160380580"/>
<dbReference type="jPOST" id="Q8N7R7"/>
<dbReference type="MassIVE" id="Q8N7R7"/>
<dbReference type="PeptideAtlas" id="Q8N7R7"/>
<dbReference type="ProteomicsDB" id="72321">
    <molecule id="Q8N7R7-1"/>
</dbReference>
<dbReference type="ProteomicsDB" id="72322">
    <molecule id="Q8N7R7-2"/>
</dbReference>
<dbReference type="ProteomicsDB" id="72323">
    <molecule id="Q8N7R7-3"/>
</dbReference>
<dbReference type="Pumba" id="Q8N7R7"/>
<dbReference type="Antibodypedia" id="52166">
    <property type="antibodies" value="117 antibodies from 20 providers"/>
</dbReference>
<dbReference type="DNASU" id="151195"/>
<dbReference type="Ensembl" id="ENST00000295414.8">
    <molecule id="Q8N7R7-1"/>
    <property type="protein sequence ID" value="ENSP00000295414.3"/>
    <property type="gene ID" value="ENSG00000163249.13"/>
</dbReference>
<dbReference type="Ensembl" id="ENST00000339882.9">
    <molecule id="Q8N7R7-2"/>
    <property type="protein sequence ID" value="ENSP00000342344.5"/>
    <property type="gene ID" value="ENSG00000163249.13"/>
</dbReference>
<dbReference type="Ensembl" id="ENST00000392209.7">
    <molecule id="Q8N7R7-3"/>
    <property type="protein sequence ID" value="ENSP00000376045.3"/>
    <property type="gene ID" value="ENSG00000163249.13"/>
</dbReference>
<dbReference type="GeneID" id="151195"/>
<dbReference type="KEGG" id="hsa:151195"/>
<dbReference type="MANE-Select" id="ENST00000295414.8">
    <property type="protein sequence ID" value="ENSP00000295414.3"/>
    <property type="RefSeq nucleotide sequence ID" value="NM_001330218.2"/>
    <property type="RefSeq protein sequence ID" value="NP_001317147.1"/>
</dbReference>
<dbReference type="UCSC" id="uc002vch.4">
    <molecule id="Q8N7R7-1"/>
    <property type="organism name" value="human"/>
</dbReference>
<dbReference type="AGR" id="HGNC:26868"/>
<dbReference type="CTD" id="151195"/>
<dbReference type="DisGeNET" id="151195"/>
<dbReference type="GeneCards" id="CCNYL1"/>
<dbReference type="HGNC" id="HGNC:26868">
    <property type="gene designation" value="CCNYL1"/>
</dbReference>
<dbReference type="HPA" id="ENSG00000163249">
    <property type="expression patterns" value="Low tissue specificity"/>
</dbReference>
<dbReference type="MIM" id="620559">
    <property type="type" value="gene"/>
</dbReference>
<dbReference type="neXtProt" id="NX_Q8N7R7"/>
<dbReference type="OpenTargets" id="ENSG00000163249"/>
<dbReference type="PharmGKB" id="PA162382009"/>
<dbReference type="VEuPathDB" id="HostDB:ENSG00000163249"/>
<dbReference type="GeneTree" id="ENSGT00940000154453"/>
<dbReference type="HOGENOM" id="CLU_055026_0_0_1"/>
<dbReference type="InParanoid" id="Q8N7R7"/>
<dbReference type="OMA" id="RWADAYQ"/>
<dbReference type="OrthoDB" id="10250320at2759"/>
<dbReference type="PAN-GO" id="Q8N7R7">
    <property type="GO annotations" value="4 GO annotations based on evolutionary models"/>
</dbReference>
<dbReference type="PhylomeDB" id="Q8N7R7"/>
<dbReference type="TreeFam" id="TF314464"/>
<dbReference type="PathwayCommons" id="Q8N7R7"/>
<dbReference type="SignaLink" id="Q8N7R7"/>
<dbReference type="BioGRID-ORCS" id="151195">
    <property type="hits" value="70 hits in 1157 CRISPR screens"/>
</dbReference>
<dbReference type="ChiTaRS" id="CCNYL1">
    <property type="organism name" value="human"/>
</dbReference>
<dbReference type="GenomeRNAi" id="151195"/>
<dbReference type="Pharos" id="Q8N7R7">
    <property type="development level" value="Tdark"/>
</dbReference>
<dbReference type="PRO" id="PR:Q8N7R7"/>
<dbReference type="Proteomes" id="UP000005640">
    <property type="component" value="Chromosome 2"/>
</dbReference>
<dbReference type="RNAct" id="Q8N7R7">
    <property type="molecule type" value="protein"/>
</dbReference>
<dbReference type="Bgee" id="ENSG00000163249">
    <property type="expression patterns" value="Expressed in secondary oocyte and 147 other cell types or tissues"/>
</dbReference>
<dbReference type="ExpressionAtlas" id="Q8N7R7">
    <property type="expression patterns" value="baseline and differential"/>
</dbReference>
<dbReference type="GO" id="GO:0005886">
    <property type="term" value="C:plasma membrane"/>
    <property type="evidence" value="ECO:0000314"/>
    <property type="project" value="HPA"/>
</dbReference>
<dbReference type="GO" id="GO:0019901">
    <property type="term" value="F:protein kinase binding"/>
    <property type="evidence" value="ECO:0007669"/>
    <property type="project" value="InterPro"/>
</dbReference>
<dbReference type="GO" id="GO:0030154">
    <property type="term" value="P:cell differentiation"/>
    <property type="evidence" value="ECO:0007669"/>
    <property type="project" value="UniProtKB-KW"/>
</dbReference>
<dbReference type="GO" id="GO:0030317">
    <property type="term" value="P:flagellated sperm motility"/>
    <property type="evidence" value="ECO:0000250"/>
    <property type="project" value="UniProtKB"/>
</dbReference>
<dbReference type="GO" id="GO:0007399">
    <property type="term" value="P:nervous system development"/>
    <property type="evidence" value="ECO:0007669"/>
    <property type="project" value="UniProtKB-KW"/>
</dbReference>
<dbReference type="GO" id="GO:0060828">
    <property type="term" value="P:regulation of canonical Wnt signaling pathway"/>
    <property type="evidence" value="ECO:0000318"/>
    <property type="project" value="GO_Central"/>
</dbReference>
<dbReference type="GO" id="GO:0001932">
    <property type="term" value="P:regulation of protein phosphorylation"/>
    <property type="evidence" value="ECO:0000250"/>
    <property type="project" value="UniProtKB"/>
</dbReference>
<dbReference type="GO" id="GO:0007283">
    <property type="term" value="P:spermatogenesis"/>
    <property type="evidence" value="ECO:0000250"/>
    <property type="project" value="UniProtKB"/>
</dbReference>
<dbReference type="CDD" id="cd20540">
    <property type="entry name" value="CYCLIN_CCNY_like"/>
    <property type="match status" value="1"/>
</dbReference>
<dbReference type="FunFam" id="1.10.472.10:FF:000011">
    <property type="entry name" value="Cyclin-Y isoform 1"/>
    <property type="match status" value="1"/>
</dbReference>
<dbReference type="Gene3D" id="1.10.472.10">
    <property type="entry name" value="Cyclin-like"/>
    <property type="match status" value="1"/>
</dbReference>
<dbReference type="InterPro" id="IPR013763">
    <property type="entry name" value="Cyclin-like_dom"/>
</dbReference>
<dbReference type="InterPro" id="IPR036915">
    <property type="entry name" value="Cyclin-like_sf"/>
</dbReference>
<dbReference type="InterPro" id="IPR006671">
    <property type="entry name" value="Cyclin_N"/>
</dbReference>
<dbReference type="InterPro" id="IPR012399">
    <property type="entry name" value="Cyclin_Y"/>
</dbReference>
<dbReference type="PANTHER" id="PTHR14248">
    <property type="entry name" value="CYCLIN Y, ISOFORM A"/>
    <property type="match status" value="1"/>
</dbReference>
<dbReference type="Pfam" id="PF00134">
    <property type="entry name" value="Cyclin_N"/>
    <property type="match status" value="1"/>
</dbReference>
<dbReference type="PIRSF" id="PIRSF028934">
    <property type="entry name" value="Cyclin_CG14939"/>
    <property type="match status" value="1"/>
</dbReference>
<dbReference type="SMART" id="SM00385">
    <property type="entry name" value="CYCLIN"/>
    <property type="match status" value="1"/>
</dbReference>
<dbReference type="SUPFAM" id="SSF47954">
    <property type="entry name" value="Cyclin-like"/>
    <property type="match status" value="1"/>
</dbReference>
<protein>
    <recommendedName>
        <fullName>Cyclin-Y-like protein 1</fullName>
    </recommendedName>
</protein>
<name>CCYL1_HUMAN</name>
<evidence type="ECO:0000250" key="1">
    <source>
        <dbReference type="UniProtKB" id="D3YUJ3"/>
    </source>
</evidence>
<evidence type="ECO:0000269" key="2">
    <source>
    </source>
</evidence>
<evidence type="ECO:0000303" key="3">
    <source>
    </source>
</evidence>
<evidence type="ECO:0000303" key="4">
    <source>
    </source>
</evidence>
<evidence type="ECO:0000305" key="5"/>
<evidence type="ECO:0000312" key="6">
    <source>
        <dbReference type="HGNC" id="HGNC:26868"/>
    </source>
</evidence>
<evidence type="ECO:0007744" key="7">
    <source>
    </source>
</evidence>
<evidence type="ECO:0007744" key="8">
    <source>
    </source>
</evidence>
<evidence type="ECO:0007744" key="9">
    <source>
    </source>
</evidence>
<evidence type="ECO:0007744" key="10">
    <source>
    </source>
</evidence>
<evidence type="ECO:0007744" key="11">
    <source>
    </source>
</evidence>
<evidence type="ECO:0007744" key="12">
    <source>
    </source>
</evidence>
<sequence length="359" mass="40705">MGNTLTCCVSPNASPKLGRRAGSAELYCASDIYEAVSGDAVAVAPAVVEPAELDFGEGEGHHLQHISDREMPEDLALESNPSDHPRASTIFLSKSQTDVREKRKSNHLNHVSPGQLTKKYSSCSTIFLDDSTVSQPNLRTTVKCVTLAIYYHIKNRDANRSLDIFDERSHPLTREKVPEEYFKHDPEHKFIYRFVRTLFSAAQLTAECAIVTLVYLERLLTYAEIDICPTNWKRIVLGAILLASKVWDDQAVWNVDYCQILKDITVEDMNEMERHFLELLQFNINVPASVYAKYYFDLRSLADDNNLNFLFAPLSKERAQNLEAISRLCEDKDLCRAAMRRSFSADNFIGIQRSKAILS</sequence>
<reference key="1">
    <citation type="journal article" date="2004" name="Nat. Genet.">
        <title>Complete sequencing and characterization of 21,243 full-length human cDNAs.</title>
        <authorList>
            <person name="Ota T."/>
            <person name="Suzuki Y."/>
            <person name="Nishikawa T."/>
            <person name="Otsuki T."/>
            <person name="Sugiyama T."/>
            <person name="Irie R."/>
            <person name="Wakamatsu A."/>
            <person name="Hayashi K."/>
            <person name="Sato H."/>
            <person name="Nagai K."/>
            <person name="Kimura K."/>
            <person name="Makita H."/>
            <person name="Sekine M."/>
            <person name="Obayashi M."/>
            <person name="Nishi T."/>
            <person name="Shibahara T."/>
            <person name="Tanaka T."/>
            <person name="Ishii S."/>
            <person name="Yamamoto J."/>
            <person name="Saito K."/>
            <person name="Kawai Y."/>
            <person name="Isono Y."/>
            <person name="Nakamura Y."/>
            <person name="Nagahari K."/>
            <person name="Murakami K."/>
            <person name="Yasuda T."/>
            <person name="Iwayanagi T."/>
            <person name="Wagatsuma M."/>
            <person name="Shiratori A."/>
            <person name="Sudo H."/>
            <person name="Hosoiri T."/>
            <person name="Kaku Y."/>
            <person name="Kodaira H."/>
            <person name="Kondo H."/>
            <person name="Sugawara M."/>
            <person name="Takahashi M."/>
            <person name="Kanda K."/>
            <person name="Yokoi T."/>
            <person name="Furuya T."/>
            <person name="Kikkawa E."/>
            <person name="Omura Y."/>
            <person name="Abe K."/>
            <person name="Kamihara K."/>
            <person name="Katsuta N."/>
            <person name="Sato K."/>
            <person name="Tanikawa M."/>
            <person name="Yamazaki M."/>
            <person name="Ninomiya K."/>
            <person name="Ishibashi T."/>
            <person name="Yamashita H."/>
            <person name="Murakawa K."/>
            <person name="Fujimori K."/>
            <person name="Tanai H."/>
            <person name="Kimata M."/>
            <person name="Watanabe M."/>
            <person name="Hiraoka S."/>
            <person name="Chiba Y."/>
            <person name="Ishida S."/>
            <person name="Ono Y."/>
            <person name="Takiguchi S."/>
            <person name="Watanabe S."/>
            <person name="Yosida M."/>
            <person name="Hotuta T."/>
            <person name="Kusano J."/>
            <person name="Kanehori K."/>
            <person name="Takahashi-Fujii A."/>
            <person name="Hara H."/>
            <person name="Tanase T.-O."/>
            <person name="Nomura Y."/>
            <person name="Togiya S."/>
            <person name="Komai F."/>
            <person name="Hara R."/>
            <person name="Takeuchi K."/>
            <person name="Arita M."/>
            <person name="Imose N."/>
            <person name="Musashino K."/>
            <person name="Yuuki H."/>
            <person name="Oshima A."/>
            <person name="Sasaki N."/>
            <person name="Aotsuka S."/>
            <person name="Yoshikawa Y."/>
            <person name="Matsunawa H."/>
            <person name="Ichihara T."/>
            <person name="Shiohata N."/>
            <person name="Sano S."/>
            <person name="Moriya S."/>
            <person name="Momiyama H."/>
            <person name="Satoh N."/>
            <person name="Takami S."/>
            <person name="Terashima Y."/>
            <person name="Suzuki O."/>
            <person name="Nakagawa S."/>
            <person name="Senoh A."/>
            <person name="Mizoguchi H."/>
            <person name="Goto Y."/>
            <person name="Shimizu F."/>
            <person name="Wakebe H."/>
            <person name="Hishigaki H."/>
            <person name="Watanabe T."/>
            <person name="Sugiyama A."/>
            <person name="Takemoto M."/>
            <person name="Kawakami B."/>
            <person name="Yamazaki M."/>
            <person name="Watanabe K."/>
            <person name="Kumagai A."/>
            <person name="Itakura S."/>
            <person name="Fukuzumi Y."/>
            <person name="Fujimori Y."/>
            <person name="Komiyama M."/>
            <person name="Tashiro H."/>
            <person name="Tanigami A."/>
            <person name="Fujiwara T."/>
            <person name="Ono T."/>
            <person name="Yamada K."/>
            <person name="Fujii Y."/>
            <person name="Ozaki K."/>
            <person name="Hirao M."/>
            <person name="Ohmori Y."/>
            <person name="Kawabata A."/>
            <person name="Hikiji T."/>
            <person name="Kobatake N."/>
            <person name="Inagaki H."/>
            <person name="Ikema Y."/>
            <person name="Okamoto S."/>
            <person name="Okitani R."/>
            <person name="Kawakami T."/>
            <person name="Noguchi S."/>
            <person name="Itoh T."/>
            <person name="Shigeta K."/>
            <person name="Senba T."/>
            <person name="Matsumura K."/>
            <person name="Nakajima Y."/>
            <person name="Mizuno T."/>
            <person name="Morinaga M."/>
            <person name="Sasaki M."/>
            <person name="Togashi T."/>
            <person name="Oyama M."/>
            <person name="Hata H."/>
            <person name="Watanabe M."/>
            <person name="Komatsu T."/>
            <person name="Mizushima-Sugano J."/>
            <person name="Satoh T."/>
            <person name="Shirai Y."/>
            <person name="Takahashi Y."/>
            <person name="Nakagawa K."/>
            <person name="Okumura K."/>
            <person name="Nagase T."/>
            <person name="Nomura N."/>
            <person name="Kikuchi H."/>
            <person name="Masuho Y."/>
            <person name="Yamashita R."/>
            <person name="Nakai K."/>
            <person name="Yada T."/>
            <person name="Nakamura Y."/>
            <person name="Ohara O."/>
            <person name="Isogai T."/>
            <person name="Sugano S."/>
        </authorList>
    </citation>
    <scope>NUCLEOTIDE SEQUENCE [LARGE SCALE MRNA] (ISOFORM 3)</scope>
    <source>
        <tissue>Testis</tissue>
    </source>
</reference>
<reference key="2">
    <citation type="journal article" date="2005" name="Nature">
        <title>Generation and annotation of the DNA sequences of human chromosomes 2 and 4.</title>
        <authorList>
            <person name="Hillier L.W."/>
            <person name="Graves T.A."/>
            <person name="Fulton R.S."/>
            <person name="Fulton L.A."/>
            <person name="Pepin K.H."/>
            <person name="Minx P."/>
            <person name="Wagner-McPherson C."/>
            <person name="Layman D."/>
            <person name="Wylie K."/>
            <person name="Sekhon M."/>
            <person name="Becker M.C."/>
            <person name="Fewell G.A."/>
            <person name="Delehaunty K.D."/>
            <person name="Miner T.L."/>
            <person name="Nash W.E."/>
            <person name="Kremitzki C."/>
            <person name="Oddy L."/>
            <person name="Du H."/>
            <person name="Sun H."/>
            <person name="Bradshaw-Cordum H."/>
            <person name="Ali J."/>
            <person name="Carter J."/>
            <person name="Cordes M."/>
            <person name="Harris A."/>
            <person name="Isak A."/>
            <person name="van Brunt A."/>
            <person name="Nguyen C."/>
            <person name="Du F."/>
            <person name="Courtney L."/>
            <person name="Kalicki J."/>
            <person name="Ozersky P."/>
            <person name="Abbott S."/>
            <person name="Armstrong J."/>
            <person name="Belter E.A."/>
            <person name="Caruso L."/>
            <person name="Cedroni M."/>
            <person name="Cotton M."/>
            <person name="Davidson T."/>
            <person name="Desai A."/>
            <person name="Elliott G."/>
            <person name="Erb T."/>
            <person name="Fronick C."/>
            <person name="Gaige T."/>
            <person name="Haakenson W."/>
            <person name="Haglund K."/>
            <person name="Holmes A."/>
            <person name="Harkins R."/>
            <person name="Kim K."/>
            <person name="Kruchowski S.S."/>
            <person name="Strong C.M."/>
            <person name="Grewal N."/>
            <person name="Goyea E."/>
            <person name="Hou S."/>
            <person name="Levy A."/>
            <person name="Martinka S."/>
            <person name="Mead K."/>
            <person name="McLellan M.D."/>
            <person name="Meyer R."/>
            <person name="Randall-Maher J."/>
            <person name="Tomlinson C."/>
            <person name="Dauphin-Kohlberg S."/>
            <person name="Kozlowicz-Reilly A."/>
            <person name="Shah N."/>
            <person name="Swearengen-Shahid S."/>
            <person name="Snider J."/>
            <person name="Strong J.T."/>
            <person name="Thompson J."/>
            <person name="Yoakum M."/>
            <person name="Leonard S."/>
            <person name="Pearman C."/>
            <person name="Trani L."/>
            <person name="Radionenko M."/>
            <person name="Waligorski J.E."/>
            <person name="Wang C."/>
            <person name="Rock S.M."/>
            <person name="Tin-Wollam A.-M."/>
            <person name="Maupin R."/>
            <person name="Latreille P."/>
            <person name="Wendl M.C."/>
            <person name="Yang S.-P."/>
            <person name="Pohl C."/>
            <person name="Wallis J.W."/>
            <person name="Spieth J."/>
            <person name="Bieri T.A."/>
            <person name="Berkowicz N."/>
            <person name="Nelson J.O."/>
            <person name="Osborne J."/>
            <person name="Ding L."/>
            <person name="Meyer R."/>
            <person name="Sabo A."/>
            <person name="Shotland Y."/>
            <person name="Sinha P."/>
            <person name="Wohldmann P.E."/>
            <person name="Cook L.L."/>
            <person name="Hickenbotham M.T."/>
            <person name="Eldred J."/>
            <person name="Williams D."/>
            <person name="Jones T.A."/>
            <person name="She X."/>
            <person name="Ciccarelli F.D."/>
            <person name="Izaurralde E."/>
            <person name="Taylor J."/>
            <person name="Schmutz J."/>
            <person name="Myers R.M."/>
            <person name="Cox D.R."/>
            <person name="Huang X."/>
            <person name="McPherson J.D."/>
            <person name="Mardis E.R."/>
            <person name="Clifton S.W."/>
            <person name="Warren W.C."/>
            <person name="Chinwalla A.T."/>
            <person name="Eddy S.R."/>
            <person name="Marra M.A."/>
            <person name="Ovcharenko I."/>
            <person name="Furey T.S."/>
            <person name="Miller W."/>
            <person name="Eichler E.E."/>
            <person name="Bork P."/>
            <person name="Suyama M."/>
            <person name="Torrents D."/>
            <person name="Waterston R.H."/>
            <person name="Wilson R.K."/>
        </authorList>
    </citation>
    <scope>NUCLEOTIDE SEQUENCE [LARGE SCALE GENOMIC DNA]</scope>
</reference>
<reference key="3">
    <citation type="submission" date="2005-07" db="EMBL/GenBank/DDBJ databases">
        <authorList>
            <person name="Mural R.J."/>
            <person name="Istrail S."/>
            <person name="Sutton G.G."/>
            <person name="Florea L."/>
            <person name="Halpern A.L."/>
            <person name="Mobarry C.M."/>
            <person name="Lippert R."/>
            <person name="Walenz B."/>
            <person name="Shatkay H."/>
            <person name="Dew I."/>
            <person name="Miller J.R."/>
            <person name="Flanigan M.J."/>
            <person name="Edwards N.J."/>
            <person name="Bolanos R."/>
            <person name="Fasulo D."/>
            <person name="Halldorsson B.V."/>
            <person name="Hannenhalli S."/>
            <person name="Turner R."/>
            <person name="Yooseph S."/>
            <person name="Lu F."/>
            <person name="Nusskern D.R."/>
            <person name="Shue B.C."/>
            <person name="Zheng X.H."/>
            <person name="Zhong F."/>
            <person name="Delcher A.L."/>
            <person name="Huson D.H."/>
            <person name="Kravitz S.A."/>
            <person name="Mouchard L."/>
            <person name="Reinert K."/>
            <person name="Remington K.A."/>
            <person name="Clark A.G."/>
            <person name="Waterman M.S."/>
            <person name="Eichler E.E."/>
            <person name="Adams M.D."/>
            <person name="Hunkapiller M.W."/>
            <person name="Myers E.W."/>
            <person name="Venter J.C."/>
        </authorList>
    </citation>
    <scope>NUCLEOTIDE SEQUENCE [LARGE SCALE GENOMIC DNA]</scope>
</reference>
<reference key="4">
    <citation type="journal article" date="2004" name="Genome Res.">
        <title>The status, quality, and expansion of the NIH full-length cDNA project: the Mammalian Gene Collection (MGC).</title>
        <authorList>
            <consortium name="The MGC Project Team"/>
        </authorList>
    </citation>
    <scope>NUCLEOTIDE SEQUENCE [LARGE SCALE MRNA] (ISOFORM 2)</scope>
    <source>
        <tissue>Uterus</tissue>
    </source>
</reference>
<reference key="5">
    <citation type="journal article" date="2008" name="J. Proteome Res.">
        <title>Combining protein-based IMAC, peptide-based IMAC, and MudPIT for efficient phosphoproteomic analysis.</title>
        <authorList>
            <person name="Cantin G.T."/>
            <person name="Yi W."/>
            <person name="Lu B."/>
            <person name="Park S.K."/>
            <person name="Xu T."/>
            <person name="Lee J.-D."/>
            <person name="Yates J.R. III"/>
        </authorList>
    </citation>
    <scope>IDENTIFICATION BY MASS SPECTROMETRY [LARGE SCALE ANALYSIS]</scope>
    <source>
        <tissue>Cervix carcinoma</tissue>
    </source>
</reference>
<reference key="6">
    <citation type="journal article" date="2008" name="Proc. Natl. Acad. Sci. U.S.A.">
        <title>A quantitative atlas of mitotic phosphorylation.</title>
        <authorList>
            <person name="Dephoure N."/>
            <person name="Zhou C."/>
            <person name="Villen J."/>
            <person name="Beausoleil S.A."/>
            <person name="Bakalarski C.E."/>
            <person name="Elledge S.J."/>
            <person name="Gygi S.P."/>
        </authorList>
    </citation>
    <scope>PHOSPHORYLATION [LARGE SCALE ANALYSIS] AT SER-344</scope>
    <scope>IDENTIFICATION BY MASS SPECTROMETRY [LARGE SCALE ANALYSIS]</scope>
    <source>
        <tissue>Cervix carcinoma</tissue>
    </source>
</reference>
<reference key="7">
    <citation type="journal article" date="2009" name="Anal. Chem.">
        <title>Lys-N and trypsin cover complementary parts of the phosphoproteome in a refined SCX-based approach.</title>
        <authorList>
            <person name="Gauci S."/>
            <person name="Helbig A.O."/>
            <person name="Slijper M."/>
            <person name="Krijgsveld J."/>
            <person name="Heck A.J."/>
            <person name="Mohammed S."/>
        </authorList>
    </citation>
    <scope>IDENTIFICATION BY MASS SPECTROMETRY [LARGE SCALE ANALYSIS]</scope>
</reference>
<reference key="8">
    <citation type="journal article" date="2009" name="Mol. Cell. Proteomics">
        <title>Large-scale proteomics analysis of the human kinome.</title>
        <authorList>
            <person name="Oppermann F.S."/>
            <person name="Gnad F."/>
            <person name="Olsen J.V."/>
            <person name="Hornberger R."/>
            <person name="Greff Z."/>
            <person name="Keri G."/>
            <person name="Mann M."/>
            <person name="Daub H."/>
        </authorList>
    </citation>
    <scope>IDENTIFICATION BY MASS SPECTROMETRY [LARGE SCALE ANALYSIS]</scope>
</reference>
<reference key="9">
    <citation type="journal article" date="2009" name="Sci. Signal.">
        <title>Quantitative phosphoproteomic analysis of T cell receptor signaling reveals system-wide modulation of protein-protein interactions.</title>
        <authorList>
            <person name="Mayya V."/>
            <person name="Lundgren D.H."/>
            <person name="Hwang S.-I."/>
            <person name="Rezaul K."/>
            <person name="Wu L."/>
            <person name="Eng J.K."/>
            <person name="Rodionov V."/>
            <person name="Han D.K."/>
        </authorList>
    </citation>
    <scope>PHOSPHORYLATION [LARGE SCALE ANALYSIS] AT SER-344</scope>
    <scope>IDENTIFICATION BY MASS SPECTROMETRY [LARGE SCALE ANALYSIS]</scope>
    <source>
        <tissue>Leukemic T-cell</tissue>
    </source>
</reference>
<reference key="10">
    <citation type="journal article" date="2010" name="Sci. Signal.">
        <title>Quantitative phosphoproteomics reveals widespread full phosphorylation site occupancy during mitosis.</title>
        <authorList>
            <person name="Olsen J.V."/>
            <person name="Vermeulen M."/>
            <person name="Santamaria A."/>
            <person name="Kumar C."/>
            <person name="Miller M.L."/>
            <person name="Jensen L.J."/>
            <person name="Gnad F."/>
            <person name="Cox J."/>
            <person name="Jensen T.S."/>
            <person name="Nigg E.A."/>
            <person name="Brunak S."/>
            <person name="Mann M."/>
        </authorList>
    </citation>
    <scope>PHOSPHORYLATION [LARGE SCALE ANALYSIS] AT SER-112 AND SER-344</scope>
    <scope>IDENTIFICATION BY MASS SPECTROMETRY [LARGE SCALE ANALYSIS]</scope>
    <source>
        <tissue>Cervix carcinoma</tissue>
    </source>
</reference>
<reference key="11">
    <citation type="journal article" date="2011" name="Sci. Signal.">
        <title>System-wide temporal characterization of the proteome and phosphoproteome of human embryonic stem cell differentiation.</title>
        <authorList>
            <person name="Rigbolt K.T."/>
            <person name="Prokhorova T.A."/>
            <person name="Akimov V."/>
            <person name="Henningsen J."/>
            <person name="Johansen P.T."/>
            <person name="Kratchmarova I."/>
            <person name="Kassem M."/>
            <person name="Mann M."/>
            <person name="Olsen J.V."/>
            <person name="Blagoev B."/>
        </authorList>
    </citation>
    <scope>PHOSPHORYLATION [LARGE SCALE ANALYSIS] AT SER-105; SER-112 AND SER-344</scope>
    <scope>IDENTIFICATION BY MASS SPECTROMETRY [LARGE SCALE ANALYSIS]</scope>
</reference>
<reference key="12">
    <citation type="journal article" date="2012" name="Mol. Cell. Biol.">
        <title>Cyclin-dependent kinase 16/PCTAIRE kinase 1 is activated by cyclin Y and is essential for spermatogenesis.</title>
        <authorList>
            <person name="Mikolcevic P."/>
            <person name="Sigl R."/>
            <person name="Rauch V."/>
            <person name="Hess M.W."/>
            <person name="Pfaller K."/>
            <person name="Barisic M."/>
            <person name="Pelliniemi L.J."/>
            <person name="Boesl M."/>
            <person name="Geley S."/>
        </authorList>
    </citation>
    <scope>SUBCELLULAR LOCATION</scope>
</reference>
<reference key="13">
    <citation type="journal article" date="2013" name="J. Proteome Res.">
        <title>Toward a comprehensive characterization of a human cancer cell phosphoproteome.</title>
        <authorList>
            <person name="Zhou H."/>
            <person name="Di Palma S."/>
            <person name="Preisinger C."/>
            <person name="Peng M."/>
            <person name="Polat A.N."/>
            <person name="Heck A.J."/>
            <person name="Mohammed S."/>
        </authorList>
    </citation>
    <scope>PHOSPHORYLATION [LARGE SCALE ANALYSIS] AT SER-112 AND SER-344</scope>
    <scope>IDENTIFICATION BY MASS SPECTROMETRY [LARGE SCALE ANALYSIS]</scope>
    <source>
        <tissue>Cervix carcinoma</tissue>
        <tissue>Erythroleukemia</tissue>
    </source>
</reference>
<reference key="14">
    <citation type="journal article" date="2014" name="J. Proteomics">
        <title>An enzyme assisted RP-RPLC approach for in-depth analysis of human liver phosphoproteome.</title>
        <authorList>
            <person name="Bian Y."/>
            <person name="Song C."/>
            <person name="Cheng K."/>
            <person name="Dong M."/>
            <person name="Wang F."/>
            <person name="Huang J."/>
            <person name="Sun D."/>
            <person name="Wang L."/>
            <person name="Ye M."/>
            <person name="Zou H."/>
        </authorList>
    </citation>
    <scope>PHOSPHORYLATION [LARGE SCALE ANALYSIS] AT SER-67 AND SER-344</scope>
    <scope>IDENTIFICATION BY MASS SPECTROMETRY [LARGE SCALE ANALYSIS]</scope>
    <source>
        <tissue>Liver</tissue>
    </source>
</reference>
<keyword id="KW-0025">Alternative splicing</keyword>
<keyword id="KW-1003">Cell membrane</keyword>
<keyword id="KW-0195">Cyclin</keyword>
<keyword id="KW-0221">Differentiation</keyword>
<keyword id="KW-0472">Membrane</keyword>
<keyword id="KW-0524">Neurogenesis</keyword>
<keyword id="KW-0597">Phosphoprotein</keyword>
<keyword id="KW-1267">Proteomics identification</keyword>
<keyword id="KW-1185">Reference proteome</keyword>
<keyword id="KW-0744">Spermatogenesis</keyword>
<gene>
    <name evidence="6" type="primary">CCNYL1</name>
</gene>
<proteinExistence type="evidence at protein level"/>
<accession>Q8N7R7</accession>
<accession>Q6NX60</accession>
<feature type="chain" id="PRO_0000309321" description="Cyclin-Y-like protein 1">
    <location>
        <begin position="1"/>
        <end position="359"/>
    </location>
</feature>
<feature type="domain" description="Cyclin N-terminal">
    <location>
        <begin position="145"/>
        <end position="267"/>
    </location>
</feature>
<feature type="modified residue" description="Phosphoserine" evidence="12">
    <location>
        <position position="67"/>
    </location>
</feature>
<feature type="modified residue" description="Phosphoserine" evidence="10">
    <location>
        <position position="105"/>
    </location>
</feature>
<feature type="modified residue" description="Phosphoserine" evidence="9 10 11">
    <location>
        <position position="112"/>
    </location>
</feature>
<feature type="modified residue" description="Phosphoserine" evidence="7 8 9 10 11 12">
    <location>
        <position position="344"/>
    </location>
</feature>
<feature type="splice variant" id="VSP_029133" description="In isoform 3." evidence="3">
    <location>
        <begin position="1"/>
        <end position="70"/>
    </location>
</feature>
<feature type="splice variant" id="VSP_029134" description="In isoform 2." evidence="4">
    <original>VSPGQLTKKYSSCSTIFLDDSTVSQPNLRTTVKCVTLAIYYHIKNRDANRSLDIFDERSHPLT</original>
    <variation>CDLSNILPHKEQ</variation>
    <location>
        <begin position="111"/>
        <end position="173"/>
    </location>
</feature>
<comment type="function">
    <text evidence="1">Key regulator of Wnt signaling implicated in various biological processes including male fertility, embryonic neurogenesis and cortex development. Activates the cyclin-dependent kinase CDK16, and promotes sperm maturation.</text>
</comment>
<comment type="subunit">
    <text evidence="1">Interacts with CDK16; this interaction mutually increases the stability of CDK16 and CCNYL1 and increases the kinase activity of CDK16.</text>
</comment>
<comment type="interaction">
    <interactant intactId="EBI-10103094">
        <id>Q8N7R7</id>
    </interactant>
    <interactant intactId="EBI-726261">
        <id>Q00536</id>
        <label>CDK16</label>
    </interactant>
    <organismsDiffer>false</organismsDiffer>
    <experiments>7</experiments>
</comment>
<comment type="interaction">
    <interactant intactId="EBI-12382996">
        <id>Q8N7R7-2</id>
    </interactant>
    <interactant intactId="EBI-16439278">
        <id>Q6FHY5</id>
        <label>MEOX2</label>
    </interactant>
    <organismsDiffer>false</organismsDiffer>
    <experiments>3</experiments>
</comment>
<comment type="subcellular location">
    <subcellularLocation>
        <location evidence="2">Cell membrane</location>
    </subcellularLocation>
</comment>
<comment type="alternative products">
    <event type="alternative splicing"/>
    <isoform>
        <id>Q8N7R7-1</id>
        <name>1</name>
        <sequence type="displayed"/>
    </isoform>
    <isoform>
        <id>Q8N7R7-2</id>
        <name>2</name>
        <sequence type="described" ref="VSP_029134"/>
    </isoform>
    <isoform>
        <id>Q8N7R7-3</id>
        <name>3</name>
        <sequence type="described" ref="VSP_029133"/>
    </isoform>
</comment>
<comment type="similarity">
    <text evidence="5">Belongs to the cyclin family. Cyclin Y subfamily.</text>
</comment>
<comment type="sequence caution" evidence="5">
    <conflict type="frameshift">
        <sequence resource="EMBL-CDS" id="AAH67253"/>
    </conflict>
</comment>
<organism>
    <name type="scientific">Homo sapiens</name>
    <name type="common">Human</name>
    <dbReference type="NCBI Taxonomy" id="9606"/>
    <lineage>
        <taxon>Eukaryota</taxon>
        <taxon>Metazoa</taxon>
        <taxon>Chordata</taxon>
        <taxon>Craniata</taxon>
        <taxon>Vertebrata</taxon>
        <taxon>Euteleostomi</taxon>
        <taxon>Mammalia</taxon>
        <taxon>Eutheria</taxon>
        <taxon>Euarchontoglires</taxon>
        <taxon>Primates</taxon>
        <taxon>Haplorrhini</taxon>
        <taxon>Catarrhini</taxon>
        <taxon>Hominidae</taxon>
        <taxon>Homo</taxon>
    </lineage>
</organism>